<reference key="1">
    <citation type="submission" date="2007-05" db="EMBL/GenBank/DDBJ databases">
        <title>Complete sequence of Thermosipho melanesiensis BI429.</title>
        <authorList>
            <consortium name="US DOE Joint Genome Institute"/>
            <person name="Copeland A."/>
            <person name="Lucas S."/>
            <person name="Lapidus A."/>
            <person name="Barry K."/>
            <person name="Glavina del Rio T."/>
            <person name="Dalin E."/>
            <person name="Tice H."/>
            <person name="Pitluck S."/>
            <person name="Chertkov O."/>
            <person name="Brettin T."/>
            <person name="Bruce D."/>
            <person name="Detter J.C."/>
            <person name="Han C."/>
            <person name="Schmutz J."/>
            <person name="Larimer F."/>
            <person name="Land M."/>
            <person name="Hauser L."/>
            <person name="Kyrpides N."/>
            <person name="Mikhailova N."/>
            <person name="Nelson K."/>
            <person name="Gogarten J.P."/>
            <person name="Noll K."/>
            <person name="Richardson P."/>
        </authorList>
    </citation>
    <scope>NUCLEOTIDE SEQUENCE [LARGE SCALE GENOMIC DNA]</scope>
    <source>
        <strain>DSM 12029 / CIP 104789 / BI429</strain>
    </source>
</reference>
<evidence type="ECO:0000255" key="1">
    <source>
        <dbReference type="HAMAP-Rule" id="MF_00259"/>
    </source>
</evidence>
<dbReference type="EC" id="2.1.2.10" evidence="1"/>
<dbReference type="EMBL" id="CP000716">
    <property type="protein sequence ID" value="ABR31718.1"/>
    <property type="molecule type" value="Genomic_DNA"/>
</dbReference>
<dbReference type="RefSeq" id="WP_012058076.1">
    <property type="nucleotide sequence ID" value="NC_009616.1"/>
</dbReference>
<dbReference type="SMR" id="A6LP67"/>
<dbReference type="STRING" id="391009.Tmel_1885"/>
<dbReference type="KEGG" id="tme:Tmel_1885"/>
<dbReference type="eggNOG" id="COG0404">
    <property type="taxonomic scope" value="Bacteria"/>
</dbReference>
<dbReference type="HOGENOM" id="CLU_007884_10_2_0"/>
<dbReference type="OrthoDB" id="9774591at2"/>
<dbReference type="Proteomes" id="UP000001110">
    <property type="component" value="Chromosome"/>
</dbReference>
<dbReference type="GO" id="GO:0005829">
    <property type="term" value="C:cytosol"/>
    <property type="evidence" value="ECO:0007669"/>
    <property type="project" value="TreeGrafter"/>
</dbReference>
<dbReference type="GO" id="GO:0005960">
    <property type="term" value="C:glycine cleavage complex"/>
    <property type="evidence" value="ECO:0007669"/>
    <property type="project" value="InterPro"/>
</dbReference>
<dbReference type="GO" id="GO:0004047">
    <property type="term" value="F:aminomethyltransferase activity"/>
    <property type="evidence" value="ECO:0007669"/>
    <property type="project" value="UniProtKB-UniRule"/>
</dbReference>
<dbReference type="GO" id="GO:0008483">
    <property type="term" value="F:transaminase activity"/>
    <property type="evidence" value="ECO:0007669"/>
    <property type="project" value="UniProtKB-KW"/>
</dbReference>
<dbReference type="GO" id="GO:0019464">
    <property type="term" value="P:glycine decarboxylation via glycine cleavage system"/>
    <property type="evidence" value="ECO:0007669"/>
    <property type="project" value="UniProtKB-UniRule"/>
</dbReference>
<dbReference type="FunFam" id="2.40.30.110:FF:000003">
    <property type="entry name" value="Aminomethyltransferase"/>
    <property type="match status" value="1"/>
</dbReference>
<dbReference type="FunFam" id="3.30.70.1400:FF:000001">
    <property type="entry name" value="Aminomethyltransferase"/>
    <property type="match status" value="1"/>
</dbReference>
<dbReference type="FunFam" id="4.10.1250.10:FF:000001">
    <property type="entry name" value="Aminomethyltransferase"/>
    <property type="match status" value="1"/>
</dbReference>
<dbReference type="Gene3D" id="2.40.30.110">
    <property type="entry name" value="Aminomethyltransferase beta-barrel domains"/>
    <property type="match status" value="1"/>
</dbReference>
<dbReference type="Gene3D" id="3.30.70.1400">
    <property type="entry name" value="Aminomethyltransferase beta-barrel domains"/>
    <property type="match status" value="1"/>
</dbReference>
<dbReference type="Gene3D" id="4.10.1250.10">
    <property type="entry name" value="Aminomethyltransferase fragment"/>
    <property type="match status" value="1"/>
</dbReference>
<dbReference type="Gene3D" id="3.30.1360.120">
    <property type="entry name" value="Probable tRNA modification gtpase trme, domain 1"/>
    <property type="match status" value="1"/>
</dbReference>
<dbReference type="HAMAP" id="MF_00259">
    <property type="entry name" value="GcvT"/>
    <property type="match status" value="1"/>
</dbReference>
<dbReference type="InterPro" id="IPR006223">
    <property type="entry name" value="GCS_T"/>
</dbReference>
<dbReference type="InterPro" id="IPR022903">
    <property type="entry name" value="GCS_T_bac"/>
</dbReference>
<dbReference type="InterPro" id="IPR013977">
    <property type="entry name" value="GCST_C"/>
</dbReference>
<dbReference type="InterPro" id="IPR006222">
    <property type="entry name" value="GCV_T_N"/>
</dbReference>
<dbReference type="InterPro" id="IPR028896">
    <property type="entry name" value="GcvT/YgfZ/DmdA"/>
</dbReference>
<dbReference type="InterPro" id="IPR029043">
    <property type="entry name" value="GcvT/YgfZ_C"/>
</dbReference>
<dbReference type="InterPro" id="IPR027266">
    <property type="entry name" value="TrmE/GcvT_dom1"/>
</dbReference>
<dbReference type="NCBIfam" id="TIGR00528">
    <property type="entry name" value="gcvT"/>
    <property type="match status" value="1"/>
</dbReference>
<dbReference type="NCBIfam" id="NF001567">
    <property type="entry name" value="PRK00389.1"/>
    <property type="match status" value="1"/>
</dbReference>
<dbReference type="PANTHER" id="PTHR43757">
    <property type="entry name" value="AMINOMETHYLTRANSFERASE"/>
    <property type="match status" value="1"/>
</dbReference>
<dbReference type="PANTHER" id="PTHR43757:SF2">
    <property type="entry name" value="AMINOMETHYLTRANSFERASE, MITOCHONDRIAL"/>
    <property type="match status" value="1"/>
</dbReference>
<dbReference type="Pfam" id="PF01571">
    <property type="entry name" value="GCV_T"/>
    <property type="match status" value="1"/>
</dbReference>
<dbReference type="Pfam" id="PF08669">
    <property type="entry name" value="GCV_T_C"/>
    <property type="match status" value="1"/>
</dbReference>
<dbReference type="PIRSF" id="PIRSF006487">
    <property type="entry name" value="GcvT"/>
    <property type="match status" value="1"/>
</dbReference>
<dbReference type="SUPFAM" id="SSF101790">
    <property type="entry name" value="Aminomethyltransferase beta-barrel domain"/>
    <property type="match status" value="1"/>
</dbReference>
<dbReference type="SUPFAM" id="SSF103025">
    <property type="entry name" value="Folate-binding domain"/>
    <property type="match status" value="1"/>
</dbReference>
<feature type="chain" id="PRO_1000047724" description="Aminomethyltransferase">
    <location>
        <begin position="1"/>
        <end position="363"/>
    </location>
</feature>
<accession>A6LP67</accession>
<protein>
    <recommendedName>
        <fullName evidence="1">Aminomethyltransferase</fullName>
        <ecNumber evidence="1">2.1.2.10</ecNumber>
    </recommendedName>
    <alternativeName>
        <fullName evidence="1">Glycine cleavage system T protein</fullName>
    </alternativeName>
</protein>
<organism>
    <name type="scientific">Thermosipho melanesiensis (strain DSM 12029 / CIP 104789 / BI429)</name>
    <dbReference type="NCBI Taxonomy" id="391009"/>
    <lineage>
        <taxon>Bacteria</taxon>
        <taxon>Thermotogati</taxon>
        <taxon>Thermotogota</taxon>
        <taxon>Thermotogae</taxon>
        <taxon>Thermotogales</taxon>
        <taxon>Fervidobacteriaceae</taxon>
        <taxon>Thermosipho</taxon>
    </lineage>
</organism>
<proteinExistence type="inferred from homology"/>
<sequence length="363" mass="40855">MKYTPLYEEHVKLGAKMVDFAGFNMPIQYTSIKDEVLAVRKNVGMFDVSHMGEVIVEGKDSTKFVDFLITNDFKNLKPGEIVYTAMCNENGGFVDDLLAYKISEEKAMLVINASNIEKDFSWMKKISESFDVTLENKSDEYVLIAVQGPNAQKTLQKITNVDLEQIGYYTFTEGNVLDIKAIISRTGYTGEDGFEIYTTDKDGIIKIWKKLLNLNVIPAGLGARDCLRLEASLLLYGNDMDETITPLEVGIKWAVKFEKDFMGKEALKRQLEEGTSRRLKGFKIIDKGIARHGYKVFKDGKEIGYVTSGTFSPTLNQAIGMALIEKGYKSGEIIEIEIRNKLVKAEIVKMPFYRGSVKSKKKG</sequence>
<name>GCST_THEM4</name>
<gene>
    <name evidence="1" type="primary">gcvT</name>
    <name type="ordered locus">Tmel_1885</name>
</gene>
<keyword id="KW-0032">Aminotransferase</keyword>
<keyword id="KW-0808">Transferase</keyword>
<comment type="function">
    <text evidence="1">The glycine cleavage system catalyzes the degradation of glycine.</text>
</comment>
<comment type="catalytic activity">
    <reaction evidence="1">
        <text>N(6)-[(R)-S(8)-aminomethyldihydrolipoyl]-L-lysyl-[protein] + (6S)-5,6,7,8-tetrahydrofolate = N(6)-[(R)-dihydrolipoyl]-L-lysyl-[protein] + (6R)-5,10-methylene-5,6,7,8-tetrahydrofolate + NH4(+)</text>
        <dbReference type="Rhea" id="RHEA:16945"/>
        <dbReference type="Rhea" id="RHEA-COMP:10475"/>
        <dbReference type="Rhea" id="RHEA-COMP:10492"/>
        <dbReference type="ChEBI" id="CHEBI:15636"/>
        <dbReference type="ChEBI" id="CHEBI:28938"/>
        <dbReference type="ChEBI" id="CHEBI:57453"/>
        <dbReference type="ChEBI" id="CHEBI:83100"/>
        <dbReference type="ChEBI" id="CHEBI:83143"/>
        <dbReference type="EC" id="2.1.2.10"/>
    </reaction>
</comment>
<comment type="subunit">
    <text evidence="1">The glycine cleavage system is composed of four proteins: P, T, L and H.</text>
</comment>
<comment type="similarity">
    <text evidence="1">Belongs to the GcvT family.</text>
</comment>